<dbReference type="EMBL" id="CP000141">
    <property type="protein sequence ID" value="ABB15449.1"/>
    <property type="molecule type" value="Genomic_DNA"/>
</dbReference>
<dbReference type="RefSeq" id="WP_011343424.1">
    <property type="nucleotide sequence ID" value="NC_007503.1"/>
</dbReference>
<dbReference type="SMR" id="Q3AET6"/>
<dbReference type="FunCoup" id="Q3AET6">
    <property type="interactions" value="397"/>
</dbReference>
<dbReference type="STRING" id="246194.CHY_0490"/>
<dbReference type="KEGG" id="chy:CHY_0490"/>
<dbReference type="eggNOG" id="COG0509">
    <property type="taxonomic scope" value="Bacteria"/>
</dbReference>
<dbReference type="HOGENOM" id="CLU_097408_2_2_9"/>
<dbReference type="InParanoid" id="Q3AET6"/>
<dbReference type="OrthoDB" id="9796712at2"/>
<dbReference type="Proteomes" id="UP000002706">
    <property type="component" value="Chromosome"/>
</dbReference>
<dbReference type="GO" id="GO:0005829">
    <property type="term" value="C:cytosol"/>
    <property type="evidence" value="ECO:0007669"/>
    <property type="project" value="TreeGrafter"/>
</dbReference>
<dbReference type="GO" id="GO:0005960">
    <property type="term" value="C:glycine cleavage complex"/>
    <property type="evidence" value="ECO:0007669"/>
    <property type="project" value="InterPro"/>
</dbReference>
<dbReference type="GO" id="GO:0019464">
    <property type="term" value="P:glycine decarboxylation via glycine cleavage system"/>
    <property type="evidence" value="ECO:0007669"/>
    <property type="project" value="UniProtKB-UniRule"/>
</dbReference>
<dbReference type="CDD" id="cd06848">
    <property type="entry name" value="GCS_H"/>
    <property type="match status" value="1"/>
</dbReference>
<dbReference type="Gene3D" id="2.40.50.100">
    <property type="match status" value="1"/>
</dbReference>
<dbReference type="HAMAP" id="MF_00272">
    <property type="entry name" value="GcvH"/>
    <property type="match status" value="1"/>
</dbReference>
<dbReference type="InterPro" id="IPR003016">
    <property type="entry name" value="2-oxoA_DH_lipoyl-BS"/>
</dbReference>
<dbReference type="InterPro" id="IPR000089">
    <property type="entry name" value="Biotin_lipoyl"/>
</dbReference>
<dbReference type="InterPro" id="IPR002930">
    <property type="entry name" value="GCV_H"/>
</dbReference>
<dbReference type="InterPro" id="IPR033753">
    <property type="entry name" value="GCV_H/Fam206"/>
</dbReference>
<dbReference type="InterPro" id="IPR017453">
    <property type="entry name" value="GCV_H_sub"/>
</dbReference>
<dbReference type="InterPro" id="IPR011053">
    <property type="entry name" value="Single_hybrid_motif"/>
</dbReference>
<dbReference type="NCBIfam" id="TIGR00527">
    <property type="entry name" value="gcvH"/>
    <property type="match status" value="1"/>
</dbReference>
<dbReference type="NCBIfam" id="NF002270">
    <property type="entry name" value="PRK01202.1"/>
    <property type="match status" value="1"/>
</dbReference>
<dbReference type="PANTHER" id="PTHR11715">
    <property type="entry name" value="GLYCINE CLEAVAGE SYSTEM H PROTEIN"/>
    <property type="match status" value="1"/>
</dbReference>
<dbReference type="PANTHER" id="PTHR11715:SF3">
    <property type="entry name" value="GLYCINE CLEAVAGE SYSTEM H PROTEIN-RELATED"/>
    <property type="match status" value="1"/>
</dbReference>
<dbReference type="Pfam" id="PF01597">
    <property type="entry name" value="GCV_H"/>
    <property type="match status" value="1"/>
</dbReference>
<dbReference type="SUPFAM" id="SSF51230">
    <property type="entry name" value="Single hybrid motif"/>
    <property type="match status" value="1"/>
</dbReference>
<dbReference type="PROSITE" id="PS50968">
    <property type="entry name" value="BIOTINYL_LIPOYL"/>
    <property type="match status" value="1"/>
</dbReference>
<dbReference type="PROSITE" id="PS00189">
    <property type="entry name" value="LIPOYL"/>
    <property type="match status" value="1"/>
</dbReference>
<organism>
    <name type="scientific">Carboxydothermus hydrogenoformans (strain ATCC BAA-161 / DSM 6008 / Z-2901)</name>
    <dbReference type="NCBI Taxonomy" id="246194"/>
    <lineage>
        <taxon>Bacteria</taxon>
        <taxon>Bacillati</taxon>
        <taxon>Bacillota</taxon>
        <taxon>Clostridia</taxon>
        <taxon>Thermoanaerobacterales</taxon>
        <taxon>Thermoanaerobacteraceae</taxon>
        <taxon>Carboxydothermus</taxon>
    </lineage>
</organism>
<evidence type="ECO:0000255" key="1">
    <source>
        <dbReference type="HAMAP-Rule" id="MF_00272"/>
    </source>
</evidence>
<evidence type="ECO:0000255" key="2">
    <source>
        <dbReference type="PROSITE-ProRule" id="PRU01066"/>
    </source>
</evidence>
<protein>
    <recommendedName>
        <fullName evidence="1">Glycine cleavage system H protein</fullName>
    </recommendedName>
</protein>
<reference key="1">
    <citation type="journal article" date="2005" name="PLoS Genet.">
        <title>Life in hot carbon monoxide: the complete genome sequence of Carboxydothermus hydrogenoformans Z-2901.</title>
        <authorList>
            <person name="Wu M."/>
            <person name="Ren Q."/>
            <person name="Durkin A.S."/>
            <person name="Daugherty S.C."/>
            <person name="Brinkac L.M."/>
            <person name="Dodson R.J."/>
            <person name="Madupu R."/>
            <person name="Sullivan S.A."/>
            <person name="Kolonay J.F."/>
            <person name="Nelson W.C."/>
            <person name="Tallon L.J."/>
            <person name="Jones K.M."/>
            <person name="Ulrich L.E."/>
            <person name="Gonzalez J.M."/>
            <person name="Zhulin I.B."/>
            <person name="Robb F.T."/>
            <person name="Eisen J.A."/>
        </authorList>
    </citation>
    <scope>NUCLEOTIDE SEQUENCE [LARGE SCALE GENOMIC DNA]</scope>
    <source>
        <strain>ATCC BAA-161 / DSM 6008 / Z-2901</strain>
    </source>
</reference>
<accession>Q3AET6</accession>
<comment type="function">
    <text evidence="1">The glycine cleavage system catalyzes the degradation of glycine. The H protein shuttles the methylamine group of glycine from the P protein to the T protein.</text>
</comment>
<comment type="cofactor">
    <cofactor evidence="1">
        <name>(R)-lipoate</name>
        <dbReference type="ChEBI" id="CHEBI:83088"/>
    </cofactor>
    <text evidence="1">Binds 1 lipoyl cofactor covalently.</text>
</comment>
<comment type="subunit">
    <text evidence="1">The glycine cleavage system is composed of four proteins: P, T, L and H.</text>
</comment>
<comment type="similarity">
    <text evidence="1">Belongs to the GcvH family.</text>
</comment>
<sequence length="130" mass="14256">MSVVPKDLKYSREHEWIKVDGNIGIIGITDFAQKSLGDIVFIELPGVGDEISAGDSFGVVESVKAASDLYAPVSGKVVEVNEEVIESPQLVNEDPYGKGWMIKVEISNEAELDELLSPEDYEKLLEEEGE</sequence>
<gene>
    <name evidence="1" type="primary">gcvH</name>
    <name type="ordered locus">CHY_0490</name>
</gene>
<keyword id="KW-0450">Lipoyl</keyword>
<keyword id="KW-1185">Reference proteome</keyword>
<proteinExistence type="inferred from homology"/>
<name>GCSH_CARHZ</name>
<feature type="chain" id="PRO_1000190194" description="Glycine cleavage system H protein">
    <location>
        <begin position="1"/>
        <end position="130"/>
    </location>
</feature>
<feature type="domain" description="Lipoyl-binding" evidence="2">
    <location>
        <begin position="23"/>
        <end position="105"/>
    </location>
</feature>
<feature type="modified residue" description="N6-lipoyllysine" evidence="1">
    <location>
        <position position="64"/>
    </location>
</feature>